<name>ATPB_PSEA8</name>
<organism>
    <name type="scientific">Pseudomonas aeruginosa (strain LESB58)</name>
    <dbReference type="NCBI Taxonomy" id="557722"/>
    <lineage>
        <taxon>Bacteria</taxon>
        <taxon>Pseudomonadati</taxon>
        <taxon>Pseudomonadota</taxon>
        <taxon>Gammaproteobacteria</taxon>
        <taxon>Pseudomonadales</taxon>
        <taxon>Pseudomonadaceae</taxon>
        <taxon>Pseudomonas</taxon>
    </lineage>
</organism>
<sequence>MSSGRIVQIIGAVIDVEFPRDAVPSIYEALKVQGVETTLEVQQQLGDGVVRSIAMGSTEGLKRGLNVDSTGAAISVPVGKATLGRIMDVLGNPIDEAGPIGEEERWGIHREAPSYADQAGGNELLETGIKVIDLVCPFAKGGKVGLFGGAGVGKTVNMMELIRNIAIEHSGYSVFAGVGERTREGNDFYHEMKDSNVLDKVALVYGQMNEPPGNRLRVALTGLTMAEKFRDEGRDVLLFIDNIYRYTLAGTEVSALLGRMPSAVGYQPTLAEEMGVLQERITSTKKGSITSIQAVYVPADDLTDPSPATTFAHLDATVVLSRDIASLGIYPAVDPLDSTSRQLDPLVIGQDHYDTARGVQYVLQRYKELKDIIAILGMDELSEADKLLVARARKIQRFLSQPFFVAEVFTGSPGKYVSLKDTIAGFKGILNGDYDHLPEQAFYMVGGIEEAVEKAKKL</sequence>
<evidence type="ECO:0000255" key="1">
    <source>
        <dbReference type="HAMAP-Rule" id="MF_01347"/>
    </source>
</evidence>
<dbReference type="EC" id="7.1.2.2" evidence="1"/>
<dbReference type="EMBL" id="FM209186">
    <property type="protein sequence ID" value="CAW30704.1"/>
    <property type="molecule type" value="Genomic_DNA"/>
</dbReference>
<dbReference type="RefSeq" id="WP_003097130.1">
    <property type="nucleotide sequence ID" value="NC_011770.1"/>
</dbReference>
<dbReference type="SMR" id="B7V791"/>
<dbReference type="GeneID" id="77224107"/>
<dbReference type="KEGG" id="pag:PLES_59501"/>
<dbReference type="HOGENOM" id="CLU_022398_0_2_6"/>
<dbReference type="GO" id="GO:0005886">
    <property type="term" value="C:plasma membrane"/>
    <property type="evidence" value="ECO:0007669"/>
    <property type="project" value="UniProtKB-SubCell"/>
</dbReference>
<dbReference type="GO" id="GO:0045259">
    <property type="term" value="C:proton-transporting ATP synthase complex"/>
    <property type="evidence" value="ECO:0007669"/>
    <property type="project" value="UniProtKB-KW"/>
</dbReference>
<dbReference type="GO" id="GO:0005524">
    <property type="term" value="F:ATP binding"/>
    <property type="evidence" value="ECO:0007669"/>
    <property type="project" value="UniProtKB-UniRule"/>
</dbReference>
<dbReference type="GO" id="GO:0016887">
    <property type="term" value="F:ATP hydrolysis activity"/>
    <property type="evidence" value="ECO:0007669"/>
    <property type="project" value="InterPro"/>
</dbReference>
<dbReference type="GO" id="GO:0046933">
    <property type="term" value="F:proton-transporting ATP synthase activity, rotational mechanism"/>
    <property type="evidence" value="ECO:0007669"/>
    <property type="project" value="UniProtKB-UniRule"/>
</dbReference>
<dbReference type="CDD" id="cd18110">
    <property type="entry name" value="ATP-synt_F1_beta_C"/>
    <property type="match status" value="1"/>
</dbReference>
<dbReference type="CDD" id="cd18115">
    <property type="entry name" value="ATP-synt_F1_beta_N"/>
    <property type="match status" value="1"/>
</dbReference>
<dbReference type="CDD" id="cd01133">
    <property type="entry name" value="F1-ATPase_beta_CD"/>
    <property type="match status" value="1"/>
</dbReference>
<dbReference type="FunFam" id="1.10.1140.10:FF:000001">
    <property type="entry name" value="ATP synthase subunit beta"/>
    <property type="match status" value="1"/>
</dbReference>
<dbReference type="FunFam" id="3.40.50.300:FF:000004">
    <property type="entry name" value="ATP synthase subunit beta"/>
    <property type="match status" value="1"/>
</dbReference>
<dbReference type="Gene3D" id="2.40.10.170">
    <property type="match status" value="1"/>
</dbReference>
<dbReference type="Gene3D" id="1.10.1140.10">
    <property type="entry name" value="Bovine Mitochondrial F1-atpase, Atp Synthase Beta Chain, Chain D, domain 3"/>
    <property type="match status" value="1"/>
</dbReference>
<dbReference type="Gene3D" id="3.40.50.300">
    <property type="entry name" value="P-loop containing nucleotide triphosphate hydrolases"/>
    <property type="match status" value="1"/>
</dbReference>
<dbReference type="HAMAP" id="MF_01347">
    <property type="entry name" value="ATP_synth_beta_bact"/>
    <property type="match status" value="1"/>
</dbReference>
<dbReference type="InterPro" id="IPR003593">
    <property type="entry name" value="AAA+_ATPase"/>
</dbReference>
<dbReference type="InterPro" id="IPR055190">
    <property type="entry name" value="ATP-synt_VA_C"/>
</dbReference>
<dbReference type="InterPro" id="IPR005722">
    <property type="entry name" value="ATP_synth_F1_bsu"/>
</dbReference>
<dbReference type="InterPro" id="IPR020003">
    <property type="entry name" value="ATPase_a/bsu_AS"/>
</dbReference>
<dbReference type="InterPro" id="IPR050053">
    <property type="entry name" value="ATPase_alpha/beta_chains"/>
</dbReference>
<dbReference type="InterPro" id="IPR004100">
    <property type="entry name" value="ATPase_F1/V1/A1_a/bsu_N"/>
</dbReference>
<dbReference type="InterPro" id="IPR036121">
    <property type="entry name" value="ATPase_F1/V1/A1_a/bsu_N_sf"/>
</dbReference>
<dbReference type="InterPro" id="IPR000194">
    <property type="entry name" value="ATPase_F1/V1/A1_a/bsu_nucl-bd"/>
</dbReference>
<dbReference type="InterPro" id="IPR024034">
    <property type="entry name" value="ATPase_F1/V1_b/a_C"/>
</dbReference>
<dbReference type="InterPro" id="IPR027417">
    <property type="entry name" value="P-loop_NTPase"/>
</dbReference>
<dbReference type="NCBIfam" id="TIGR01039">
    <property type="entry name" value="atpD"/>
    <property type="match status" value="1"/>
</dbReference>
<dbReference type="PANTHER" id="PTHR15184">
    <property type="entry name" value="ATP SYNTHASE"/>
    <property type="match status" value="1"/>
</dbReference>
<dbReference type="PANTHER" id="PTHR15184:SF71">
    <property type="entry name" value="ATP SYNTHASE SUBUNIT BETA, MITOCHONDRIAL"/>
    <property type="match status" value="1"/>
</dbReference>
<dbReference type="Pfam" id="PF00006">
    <property type="entry name" value="ATP-synt_ab"/>
    <property type="match status" value="1"/>
</dbReference>
<dbReference type="Pfam" id="PF02874">
    <property type="entry name" value="ATP-synt_ab_N"/>
    <property type="match status" value="1"/>
</dbReference>
<dbReference type="Pfam" id="PF22919">
    <property type="entry name" value="ATP-synt_VA_C"/>
    <property type="match status" value="1"/>
</dbReference>
<dbReference type="SMART" id="SM00382">
    <property type="entry name" value="AAA"/>
    <property type="match status" value="1"/>
</dbReference>
<dbReference type="SUPFAM" id="SSF47917">
    <property type="entry name" value="C-terminal domain of alpha and beta subunits of F1 ATP synthase"/>
    <property type="match status" value="1"/>
</dbReference>
<dbReference type="SUPFAM" id="SSF50615">
    <property type="entry name" value="N-terminal domain of alpha and beta subunits of F1 ATP synthase"/>
    <property type="match status" value="1"/>
</dbReference>
<dbReference type="SUPFAM" id="SSF52540">
    <property type="entry name" value="P-loop containing nucleoside triphosphate hydrolases"/>
    <property type="match status" value="1"/>
</dbReference>
<dbReference type="PROSITE" id="PS00152">
    <property type="entry name" value="ATPASE_ALPHA_BETA"/>
    <property type="match status" value="1"/>
</dbReference>
<keyword id="KW-0066">ATP synthesis</keyword>
<keyword id="KW-0067">ATP-binding</keyword>
<keyword id="KW-0997">Cell inner membrane</keyword>
<keyword id="KW-1003">Cell membrane</keyword>
<keyword id="KW-0139">CF(1)</keyword>
<keyword id="KW-0375">Hydrogen ion transport</keyword>
<keyword id="KW-0406">Ion transport</keyword>
<keyword id="KW-0472">Membrane</keyword>
<keyword id="KW-0547">Nucleotide-binding</keyword>
<keyword id="KW-1278">Translocase</keyword>
<keyword id="KW-0813">Transport</keyword>
<gene>
    <name evidence="1" type="primary">atpD</name>
    <name type="ordered locus">PLES_59501</name>
</gene>
<accession>B7V791</accession>
<proteinExistence type="inferred from homology"/>
<protein>
    <recommendedName>
        <fullName evidence="1">ATP synthase subunit beta</fullName>
        <ecNumber evidence="1">7.1.2.2</ecNumber>
    </recommendedName>
    <alternativeName>
        <fullName evidence="1">ATP synthase F1 sector subunit beta</fullName>
    </alternativeName>
    <alternativeName>
        <fullName evidence="1">F-ATPase subunit beta</fullName>
    </alternativeName>
</protein>
<reference key="1">
    <citation type="journal article" date="2009" name="Genome Res.">
        <title>Newly introduced genomic prophage islands are critical determinants of in vivo competitiveness in the Liverpool epidemic strain of Pseudomonas aeruginosa.</title>
        <authorList>
            <person name="Winstanley C."/>
            <person name="Langille M.G.I."/>
            <person name="Fothergill J.L."/>
            <person name="Kukavica-Ibrulj I."/>
            <person name="Paradis-Bleau C."/>
            <person name="Sanschagrin F."/>
            <person name="Thomson N.R."/>
            <person name="Winsor G.L."/>
            <person name="Quail M.A."/>
            <person name="Lennard N."/>
            <person name="Bignell A."/>
            <person name="Clarke L."/>
            <person name="Seeger K."/>
            <person name="Saunders D."/>
            <person name="Harris D."/>
            <person name="Parkhill J."/>
            <person name="Hancock R.E.W."/>
            <person name="Brinkman F.S.L."/>
            <person name="Levesque R.C."/>
        </authorList>
    </citation>
    <scope>NUCLEOTIDE SEQUENCE [LARGE SCALE GENOMIC DNA]</scope>
    <source>
        <strain>LESB58</strain>
    </source>
</reference>
<feature type="chain" id="PRO_1000143533" description="ATP synthase subunit beta">
    <location>
        <begin position="1"/>
        <end position="458"/>
    </location>
</feature>
<feature type="binding site" evidence="1">
    <location>
        <begin position="148"/>
        <end position="155"/>
    </location>
    <ligand>
        <name>ATP</name>
        <dbReference type="ChEBI" id="CHEBI:30616"/>
    </ligand>
</feature>
<comment type="function">
    <text evidence="1">Produces ATP from ADP in the presence of a proton gradient across the membrane. The catalytic sites are hosted primarily by the beta subunits.</text>
</comment>
<comment type="catalytic activity">
    <reaction evidence="1">
        <text>ATP + H2O + 4 H(+)(in) = ADP + phosphate + 5 H(+)(out)</text>
        <dbReference type="Rhea" id="RHEA:57720"/>
        <dbReference type="ChEBI" id="CHEBI:15377"/>
        <dbReference type="ChEBI" id="CHEBI:15378"/>
        <dbReference type="ChEBI" id="CHEBI:30616"/>
        <dbReference type="ChEBI" id="CHEBI:43474"/>
        <dbReference type="ChEBI" id="CHEBI:456216"/>
        <dbReference type="EC" id="7.1.2.2"/>
    </reaction>
</comment>
<comment type="subunit">
    <text evidence="1">F-type ATPases have 2 components, CF(1) - the catalytic core - and CF(0) - the membrane proton channel. CF(1) has five subunits: alpha(3), beta(3), gamma(1), delta(1), epsilon(1). CF(0) has three main subunits: a(1), b(2) and c(9-12). The alpha and beta chains form an alternating ring which encloses part of the gamma chain. CF(1) is attached to CF(0) by a central stalk formed by the gamma and epsilon chains, while a peripheral stalk is formed by the delta and b chains.</text>
</comment>
<comment type="subcellular location">
    <subcellularLocation>
        <location evidence="1">Cell inner membrane</location>
        <topology evidence="1">Peripheral membrane protein</topology>
    </subcellularLocation>
</comment>
<comment type="similarity">
    <text evidence="1">Belongs to the ATPase alpha/beta chains family.</text>
</comment>